<gene>
    <name type="ordered locus">MTH_692</name>
</gene>
<proteinExistence type="inferred from homology"/>
<sequence length="318" mass="35425">MILELIIVLVLLVLAFKSLKILRPYEKGVVERLGKYQRTVESGLVVIIPFIEAIKKVDMREQVVDVPPQEVITKDNTVVVVDCVIFYEVVDPFNAVYNVVDFYQAITKLAQTNLRNIIGDLELDQTLTSREMINTQLREVLDEATDKWGTRVVRVEIQRIEPPGDIVEAMSKQMKAERMKRAAILEAEGYKQSEIKRAEGDKQAAILEAEGKAEAIKKVADANKYREIAIAEGQAKAILSVFRAMHEGDPTNDIIALKYLEALEKVADGRATKILLPVEATGILGSIAGISEMLSDPEDKGVSEVETESQPAEKPEKH</sequence>
<evidence type="ECO:0000255" key="1"/>
<evidence type="ECO:0000256" key="2">
    <source>
        <dbReference type="SAM" id="MobiDB-lite"/>
    </source>
</evidence>
<evidence type="ECO:0000305" key="3"/>
<feature type="chain" id="PRO_0000094065" description="Uncharacterized protein MTH_692">
    <location>
        <begin position="1"/>
        <end position="318"/>
    </location>
</feature>
<feature type="transmembrane region" description="Helical" evidence="1">
    <location>
        <begin position="2"/>
        <end position="22"/>
    </location>
</feature>
<feature type="region of interest" description="Disordered" evidence="2">
    <location>
        <begin position="295"/>
        <end position="318"/>
    </location>
</feature>
<comment type="subcellular location">
    <subcellularLocation>
        <location evidence="3">Membrane</location>
        <topology evidence="3">Single-pass membrane protein</topology>
    </subcellularLocation>
</comment>
<comment type="similarity">
    <text evidence="3">Belongs to the band 7/mec-2 family.</text>
</comment>
<reference key="1">
    <citation type="journal article" date="1997" name="J. Bacteriol.">
        <title>Complete genome sequence of Methanobacterium thermoautotrophicum deltaH: functional analysis and comparative genomics.</title>
        <authorList>
            <person name="Smith D.R."/>
            <person name="Doucette-Stamm L.A."/>
            <person name="Deloughery C."/>
            <person name="Lee H.-M."/>
            <person name="Dubois J."/>
            <person name="Aldredge T."/>
            <person name="Bashirzadeh R."/>
            <person name="Blakely D."/>
            <person name="Cook R."/>
            <person name="Gilbert K."/>
            <person name="Harrison D."/>
            <person name="Hoang L."/>
            <person name="Keagle P."/>
            <person name="Lumm W."/>
            <person name="Pothier B."/>
            <person name="Qiu D."/>
            <person name="Spadafora R."/>
            <person name="Vicare R."/>
            <person name="Wang Y."/>
            <person name="Wierzbowski J."/>
            <person name="Gibson R."/>
            <person name="Jiwani N."/>
            <person name="Caruso A."/>
            <person name="Bush D."/>
            <person name="Safer H."/>
            <person name="Patwell D."/>
            <person name="Prabhakar S."/>
            <person name="McDougall S."/>
            <person name="Shimer G."/>
            <person name="Goyal A."/>
            <person name="Pietrovski S."/>
            <person name="Church G.M."/>
            <person name="Daniels C.J."/>
            <person name="Mao J.-I."/>
            <person name="Rice P."/>
            <person name="Noelling J."/>
            <person name="Reeve J.N."/>
        </authorList>
    </citation>
    <scope>NUCLEOTIDE SEQUENCE [LARGE SCALE GENOMIC DNA]</scope>
    <source>
        <strain>ATCC 29096 / DSM 1053 / JCM 10044 / NBRC 100330 / Delta H</strain>
    </source>
</reference>
<protein>
    <recommendedName>
        <fullName>Uncharacterized protein MTH_692</fullName>
    </recommendedName>
</protein>
<accession>O26788</accession>
<organism>
    <name type="scientific">Methanothermobacter thermautotrophicus (strain ATCC 29096 / DSM 1053 / JCM 10044 / NBRC 100330 / Delta H)</name>
    <name type="common">Methanobacterium thermoautotrophicum</name>
    <dbReference type="NCBI Taxonomy" id="187420"/>
    <lineage>
        <taxon>Archaea</taxon>
        <taxon>Methanobacteriati</taxon>
        <taxon>Methanobacteriota</taxon>
        <taxon>Methanomada group</taxon>
        <taxon>Methanobacteria</taxon>
        <taxon>Methanobacteriales</taxon>
        <taxon>Methanobacteriaceae</taxon>
        <taxon>Methanothermobacter</taxon>
    </lineage>
</organism>
<name>Y692_METTH</name>
<keyword id="KW-0472">Membrane</keyword>
<keyword id="KW-1185">Reference proteome</keyword>
<keyword id="KW-0812">Transmembrane</keyword>
<keyword id="KW-1133">Transmembrane helix</keyword>
<dbReference type="EMBL" id="AE000666">
    <property type="protein sequence ID" value="AAB85197.1"/>
    <property type="molecule type" value="Genomic_DNA"/>
</dbReference>
<dbReference type="PIR" id="C69192">
    <property type="entry name" value="C69192"/>
</dbReference>
<dbReference type="RefSeq" id="WP_010876331.1">
    <property type="nucleotide sequence ID" value="NC_000916.1"/>
</dbReference>
<dbReference type="SMR" id="O26788"/>
<dbReference type="FunCoup" id="O26788">
    <property type="interactions" value="13"/>
</dbReference>
<dbReference type="STRING" id="187420.MTH_692"/>
<dbReference type="PaxDb" id="187420-MTH_692"/>
<dbReference type="EnsemblBacteria" id="AAB85197">
    <property type="protein sequence ID" value="AAB85197"/>
    <property type="gene ID" value="MTH_692"/>
</dbReference>
<dbReference type="KEGG" id="mth:MTH_692"/>
<dbReference type="PATRIC" id="fig|187420.15.peg.673"/>
<dbReference type="HOGENOM" id="CLU_024949_2_2_2"/>
<dbReference type="InParanoid" id="O26788"/>
<dbReference type="Proteomes" id="UP000005223">
    <property type="component" value="Chromosome"/>
</dbReference>
<dbReference type="GO" id="GO:0016020">
    <property type="term" value="C:membrane"/>
    <property type="evidence" value="ECO:0007669"/>
    <property type="project" value="UniProtKB-SubCell"/>
</dbReference>
<dbReference type="CDD" id="cd08829">
    <property type="entry name" value="SPFH_paraslipin"/>
    <property type="match status" value="1"/>
</dbReference>
<dbReference type="FunFam" id="3.30.479.30:FF:000004">
    <property type="entry name" value="Putative membrane protease family, stomatin"/>
    <property type="match status" value="1"/>
</dbReference>
<dbReference type="Gene3D" id="3.30.479.30">
    <property type="entry name" value="Band 7 domain"/>
    <property type="match status" value="1"/>
</dbReference>
<dbReference type="InterPro" id="IPR050710">
    <property type="entry name" value="Band7/mec-2_domain"/>
</dbReference>
<dbReference type="InterPro" id="IPR001107">
    <property type="entry name" value="Band_7"/>
</dbReference>
<dbReference type="InterPro" id="IPR036013">
    <property type="entry name" value="Band_7/SPFH_dom_sf"/>
</dbReference>
<dbReference type="InterPro" id="IPR018080">
    <property type="entry name" value="Band_7/stomatin-like_CS"/>
</dbReference>
<dbReference type="InterPro" id="IPR001972">
    <property type="entry name" value="Stomatin_HflK_fam"/>
</dbReference>
<dbReference type="PANTHER" id="PTHR43327">
    <property type="entry name" value="STOMATIN-LIKE PROTEIN 2, MITOCHONDRIAL"/>
    <property type="match status" value="1"/>
</dbReference>
<dbReference type="PANTHER" id="PTHR43327:SF10">
    <property type="entry name" value="STOMATIN-LIKE PROTEIN 2, MITOCHONDRIAL"/>
    <property type="match status" value="1"/>
</dbReference>
<dbReference type="Pfam" id="PF01145">
    <property type="entry name" value="Band_7"/>
    <property type="match status" value="1"/>
</dbReference>
<dbReference type="PRINTS" id="PR00721">
    <property type="entry name" value="STOMATIN"/>
</dbReference>
<dbReference type="SMART" id="SM00244">
    <property type="entry name" value="PHB"/>
    <property type="match status" value="1"/>
</dbReference>
<dbReference type="SUPFAM" id="SSF117892">
    <property type="entry name" value="Band 7/SPFH domain"/>
    <property type="match status" value="1"/>
</dbReference>
<dbReference type="PROSITE" id="PS01270">
    <property type="entry name" value="BAND_7"/>
    <property type="match status" value="1"/>
</dbReference>